<evidence type="ECO:0000255" key="1">
    <source>
        <dbReference type="HAMAP-Rule" id="MF_00191"/>
    </source>
</evidence>
<reference key="1">
    <citation type="journal article" date="2009" name="Environ. Microbiol.">
        <title>Contribution of mobile genetic elements to Desulfovibrio vulgaris genome plasticity.</title>
        <authorList>
            <person name="Walker C.B."/>
            <person name="Stolyar S."/>
            <person name="Chivian D."/>
            <person name="Pinel N."/>
            <person name="Gabster J.A."/>
            <person name="Dehal P.S."/>
            <person name="He Z."/>
            <person name="Yang Z.K."/>
            <person name="Yen H.C."/>
            <person name="Zhou J."/>
            <person name="Wall J.D."/>
            <person name="Hazen T.C."/>
            <person name="Arkin A.P."/>
            <person name="Stahl D.A."/>
        </authorList>
    </citation>
    <scope>NUCLEOTIDE SEQUENCE [LARGE SCALE GENOMIC DNA]</scope>
    <source>
        <strain>DP4</strain>
    </source>
</reference>
<organism>
    <name type="scientific">Nitratidesulfovibrio vulgaris (strain DP4)</name>
    <name type="common">Desulfovibrio vulgaris</name>
    <dbReference type="NCBI Taxonomy" id="391774"/>
    <lineage>
        <taxon>Bacteria</taxon>
        <taxon>Pseudomonadati</taxon>
        <taxon>Thermodesulfobacteriota</taxon>
        <taxon>Desulfovibrionia</taxon>
        <taxon>Desulfovibrionales</taxon>
        <taxon>Desulfovibrionaceae</taxon>
        <taxon>Nitratidesulfovibrio</taxon>
    </lineage>
</organism>
<gene>
    <name evidence="1" type="primary">ispH</name>
    <name type="ordered locus">Dvul_2906</name>
</gene>
<proteinExistence type="inferred from homology"/>
<dbReference type="EC" id="1.17.7.4" evidence="1"/>
<dbReference type="EMBL" id="CP000527">
    <property type="protein sequence ID" value="ABM29917.1"/>
    <property type="molecule type" value="Genomic_DNA"/>
</dbReference>
<dbReference type="RefSeq" id="WP_011793164.1">
    <property type="nucleotide sequence ID" value="NC_008751.1"/>
</dbReference>
<dbReference type="SMR" id="A1VHK1"/>
<dbReference type="KEGG" id="dvl:Dvul_2906"/>
<dbReference type="HOGENOM" id="CLU_027486_0_1_7"/>
<dbReference type="UniPathway" id="UPA00056">
    <property type="reaction ID" value="UER00097"/>
</dbReference>
<dbReference type="UniPathway" id="UPA00059">
    <property type="reaction ID" value="UER00105"/>
</dbReference>
<dbReference type="Proteomes" id="UP000009173">
    <property type="component" value="Chromosome"/>
</dbReference>
<dbReference type="GO" id="GO:0051539">
    <property type="term" value="F:4 iron, 4 sulfur cluster binding"/>
    <property type="evidence" value="ECO:0007669"/>
    <property type="project" value="UniProtKB-UniRule"/>
</dbReference>
<dbReference type="GO" id="GO:0051745">
    <property type="term" value="F:4-hydroxy-3-methylbut-2-enyl diphosphate reductase activity"/>
    <property type="evidence" value="ECO:0007669"/>
    <property type="project" value="UniProtKB-UniRule"/>
</dbReference>
<dbReference type="GO" id="GO:0046872">
    <property type="term" value="F:metal ion binding"/>
    <property type="evidence" value="ECO:0007669"/>
    <property type="project" value="UniProtKB-KW"/>
</dbReference>
<dbReference type="GO" id="GO:0050992">
    <property type="term" value="P:dimethylallyl diphosphate biosynthetic process"/>
    <property type="evidence" value="ECO:0007669"/>
    <property type="project" value="UniProtKB-UniRule"/>
</dbReference>
<dbReference type="GO" id="GO:0019288">
    <property type="term" value="P:isopentenyl diphosphate biosynthetic process, methylerythritol 4-phosphate pathway"/>
    <property type="evidence" value="ECO:0007669"/>
    <property type="project" value="UniProtKB-UniRule"/>
</dbReference>
<dbReference type="GO" id="GO:0016114">
    <property type="term" value="P:terpenoid biosynthetic process"/>
    <property type="evidence" value="ECO:0007669"/>
    <property type="project" value="UniProtKB-UniRule"/>
</dbReference>
<dbReference type="CDD" id="cd13944">
    <property type="entry name" value="lytB_ispH"/>
    <property type="match status" value="1"/>
</dbReference>
<dbReference type="Gene3D" id="3.40.50.11270">
    <property type="match status" value="1"/>
</dbReference>
<dbReference type="Gene3D" id="3.40.1010.20">
    <property type="entry name" value="4-hydroxy-3-methylbut-2-enyl diphosphate reductase, catalytic domain"/>
    <property type="match status" value="2"/>
</dbReference>
<dbReference type="HAMAP" id="MF_00191">
    <property type="entry name" value="IspH"/>
    <property type="match status" value="1"/>
</dbReference>
<dbReference type="InterPro" id="IPR003451">
    <property type="entry name" value="LytB/IspH"/>
</dbReference>
<dbReference type="NCBIfam" id="TIGR00216">
    <property type="entry name" value="ispH_lytB"/>
    <property type="match status" value="1"/>
</dbReference>
<dbReference type="PANTHER" id="PTHR30426">
    <property type="entry name" value="4-HYDROXY-3-METHYLBUT-2-ENYL DIPHOSPHATE REDUCTASE"/>
    <property type="match status" value="1"/>
</dbReference>
<dbReference type="PANTHER" id="PTHR30426:SF0">
    <property type="entry name" value="4-HYDROXY-3-METHYLBUT-2-ENYL DIPHOSPHATE REDUCTASE"/>
    <property type="match status" value="1"/>
</dbReference>
<dbReference type="Pfam" id="PF02401">
    <property type="entry name" value="LYTB"/>
    <property type="match status" value="1"/>
</dbReference>
<protein>
    <recommendedName>
        <fullName evidence="1">4-hydroxy-3-methylbut-2-enyl diphosphate reductase</fullName>
        <shortName evidence="1">HMBPP reductase</shortName>
        <ecNumber evidence="1">1.17.7.4</ecNumber>
    </recommendedName>
</protein>
<feature type="chain" id="PRO_1000021115" description="4-hydroxy-3-methylbut-2-enyl diphosphate reductase">
    <location>
        <begin position="1"/>
        <end position="290"/>
    </location>
</feature>
<feature type="active site" description="Proton donor" evidence="1">
    <location>
        <position position="135"/>
    </location>
</feature>
<feature type="binding site" evidence="1">
    <location>
        <position position="12"/>
    </location>
    <ligand>
        <name>[4Fe-4S] cluster</name>
        <dbReference type="ChEBI" id="CHEBI:49883"/>
    </ligand>
</feature>
<feature type="binding site" evidence="1">
    <location>
        <position position="50"/>
    </location>
    <ligand>
        <name>(2E)-4-hydroxy-3-methylbut-2-enyl diphosphate</name>
        <dbReference type="ChEBI" id="CHEBI:128753"/>
    </ligand>
</feature>
<feature type="binding site" evidence="1">
    <location>
        <position position="50"/>
    </location>
    <ligand>
        <name>dimethylallyl diphosphate</name>
        <dbReference type="ChEBI" id="CHEBI:57623"/>
    </ligand>
</feature>
<feature type="binding site" evidence="1">
    <location>
        <position position="50"/>
    </location>
    <ligand>
        <name>isopentenyl diphosphate</name>
        <dbReference type="ChEBI" id="CHEBI:128769"/>
    </ligand>
</feature>
<feature type="binding site" evidence="1">
    <location>
        <position position="83"/>
    </location>
    <ligand>
        <name>(2E)-4-hydroxy-3-methylbut-2-enyl diphosphate</name>
        <dbReference type="ChEBI" id="CHEBI:128753"/>
    </ligand>
</feature>
<feature type="binding site" evidence="1">
    <location>
        <position position="83"/>
    </location>
    <ligand>
        <name>dimethylallyl diphosphate</name>
        <dbReference type="ChEBI" id="CHEBI:57623"/>
    </ligand>
</feature>
<feature type="binding site" evidence="1">
    <location>
        <position position="83"/>
    </location>
    <ligand>
        <name>isopentenyl diphosphate</name>
        <dbReference type="ChEBI" id="CHEBI:128769"/>
    </ligand>
</feature>
<feature type="binding site" evidence="1">
    <location>
        <position position="105"/>
    </location>
    <ligand>
        <name>[4Fe-4S] cluster</name>
        <dbReference type="ChEBI" id="CHEBI:49883"/>
    </ligand>
</feature>
<feature type="binding site" evidence="1">
    <location>
        <position position="133"/>
    </location>
    <ligand>
        <name>(2E)-4-hydroxy-3-methylbut-2-enyl diphosphate</name>
        <dbReference type="ChEBI" id="CHEBI:128753"/>
    </ligand>
</feature>
<feature type="binding site" evidence="1">
    <location>
        <position position="133"/>
    </location>
    <ligand>
        <name>dimethylallyl diphosphate</name>
        <dbReference type="ChEBI" id="CHEBI:57623"/>
    </ligand>
</feature>
<feature type="binding site" evidence="1">
    <location>
        <position position="133"/>
    </location>
    <ligand>
        <name>isopentenyl diphosphate</name>
        <dbReference type="ChEBI" id="CHEBI:128769"/>
    </ligand>
</feature>
<feature type="binding site" evidence="1">
    <location>
        <position position="173"/>
    </location>
    <ligand>
        <name>(2E)-4-hydroxy-3-methylbut-2-enyl diphosphate</name>
        <dbReference type="ChEBI" id="CHEBI:128753"/>
    </ligand>
</feature>
<feature type="binding site" evidence="1">
    <location>
        <position position="202"/>
    </location>
    <ligand>
        <name>[4Fe-4S] cluster</name>
        <dbReference type="ChEBI" id="CHEBI:49883"/>
    </ligand>
</feature>
<feature type="binding site" evidence="1">
    <location>
        <position position="230"/>
    </location>
    <ligand>
        <name>(2E)-4-hydroxy-3-methylbut-2-enyl diphosphate</name>
        <dbReference type="ChEBI" id="CHEBI:128753"/>
    </ligand>
</feature>
<feature type="binding site" evidence="1">
    <location>
        <position position="230"/>
    </location>
    <ligand>
        <name>dimethylallyl diphosphate</name>
        <dbReference type="ChEBI" id="CHEBI:57623"/>
    </ligand>
</feature>
<feature type="binding site" evidence="1">
    <location>
        <position position="230"/>
    </location>
    <ligand>
        <name>isopentenyl diphosphate</name>
        <dbReference type="ChEBI" id="CHEBI:128769"/>
    </ligand>
</feature>
<feature type="binding site" evidence="1">
    <location>
        <position position="232"/>
    </location>
    <ligand>
        <name>(2E)-4-hydroxy-3-methylbut-2-enyl diphosphate</name>
        <dbReference type="ChEBI" id="CHEBI:128753"/>
    </ligand>
</feature>
<feature type="binding site" evidence="1">
    <location>
        <position position="232"/>
    </location>
    <ligand>
        <name>dimethylallyl diphosphate</name>
        <dbReference type="ChEBI" id="CHEBI:57623"/>
    </ligand>
</feature>
<feature type="binding site" evidence="1">
    <location>
        <position position="232"/>
    </location>
    <ligand>
        <name>isopentenyl diphosphate</name>
        <dbReference type="ChEBI" id="CHEBI:128769"/>
    </ligand>
</feature>
<feature type="binding site" evidence="1">
    <location>
        <position position="274"/>
    </location>
    <ligand>
        <name>(2E)-4-hydroxy-3-methylbut-2-enyl diphosphate</name>
        <dbReference type="ChEBI" id="CHEBI:128753"/>
    </ligand>
</feature>
<feature type="binding site" evidence="1">
    <location>
        <position position="274"/>
    </location>
    <ligand>
        <name>dimethylallyl diphosphate</name>
        <dbReference type="ChEBI" id="CHEBI:57623"/>
    </ligand>
</feature>
<feature type="binding site" evidence="1">
    <location>
        <position position="274"/>
    </location>
    <ligand>
        <name>isopentenyl diphosphate</name>
        <dbReference type="ChEBI" id="CHEBI:128769"/>
    </ligand>
</feature>
<accession>A1VHK1</accession>
<comment type="function">
    <text evidence="1">Catalyzes the conversion of 1-hydroxy-2-methyl-2-(E)-butenyl 4-diphosphate (HMBPP) into a mixture of isopentenyl diphosphate (IPP) and dimethylallyl diphosphate (DMAPP). Acts in the terminal step of the DOXP/MEP pathway for isoprenoid precursor biosynthesis.</text>
</comment>
<comment type="catalytic activity">
    <reaction evidence="1">
        <text>isopentenyl diphosphate + 2 oxidized [2Fe-2S]-[ferredoxin] + H2O = (2E)-4-hydroxy-3-methylbut-2-enyl diphosphate + 2 reduced [2Fe-2S]-[ferredoxin] + 2 H(+)</text>
        <dbReference type="Rhea" id="RHEA:24488"/>
        <dbReference type="Rhea" id="RHEA-COMP:10000"/>
        <dbReference type="Rhea" id="RHEA-COMP:10001"/>
        <dbReference type="ChEBI" id="CHEBI:15377"/>
        <dbReference type="ChEBI" id="CHEBI:15378"/>
        <dbReference type="ChEBI" id="CHEBI:33737"/>
        <dbReference type="ChEBI" id="CHEBI:33738"/>
        <dbReference type="ChEBI" id="CHEBI:128753"/>
        <dbReference type="ChEBI" id="CHEBI:128769"/>
        <dbReference type="EC" id="1.17.7.4"/>
    </reaction>
</comment>
<comment type="catalytic activity">
    <reaction evidence="1">
        <text>dimethylallyl diphosphate + 2 oxidized [2Fe-2S]-[ferredoxin] + H2O = (2E)-4-hydroxy-3-methylbut-2-enyl diphosphate + 2 reduced [2Fe-2S]-[ferredoxin] + 2 H(+)</text>
        <dbReference type="Rhea" id="RHEA:24825"/>
        <dbReference type="Rhea" id="RHEA-COMP:10000"/>
        <dbReference type="Rhea" id="RHEA-COMP:10001"/>
        <dbReference type="ChEBI" id="CHEBI:15377"/>
        <dbReference type="ChEBI" id="CHEBI:15378"/>
        <dbReference type="ChEBI" id="CHEBI:33737"/>
        <dbReference type="ChEBI" id="CHEBI:33738"/>
        <dbReference type="ChEBI" id="CHEBI:57623"/>
        <dbReference type="ChEBI" id="CHEBI:128753"/>
        <dbReference type="EC" id="1.17.7.4"/>
    </reaction>
</comment>
<comment type="cofactor">
    <cofactor evidence="1">
        <name>[4Fe-4S] cluster</name>
        <dbReference type="ChEBI" id="CHEBI:49883"/>
    </cofactor>
    <text evidence="1">Binds 1 [4Fe-4S] cluster per subunit.</text>
</comment>
<comment type="pathway">
    <text evidence="1">Isoprenoid biosynthesis; dimethylallyl diphosphate biosynthesis; dimethylallyl diphosphate from (2E)-4-hydroxy-3-methylbutenyl diphosphate: step 1/1.</text>
</comment>
<comment type="pathway">
    <text evidence="1">Isoprenoid biosynthesis; isopentenyl diphosphate biosynthesis via DXP pathway; isopentenyl diphosphate from 1-deoxy-D-xylulose 5-phosphate: step 6/6.</text>
</comment>
<comment type="similarity">
    <text evidence="1">Belongs to the IspH family.</text>
</comment>
<name>ISPH_NITV4</name>
<keyword id="KW-0004">4Fe-4S</keyword>
<keyword id="KW-0408">Iron</keyword>
<keyword id="KW-0411">Iron-sulfur</keyword>
<keyword id="KW-0414">Isoprene biosynthesis</keyword>
<keyword id="KW-0479">Metal-binding</keyword>
<keyword id="KW-0560">Oxidoreductase</keyword>
<sequence>MNVIRARTAGFCMGVSLALRKLDREVDRAEEKAAQGSPRCRIATFGPIIHNPQVLEAYAGMGVRCLRQVDEVEAGDHVVIRAHGVPQQQEKALRSRDAVVVDATCPKVKKAQLGIEEQCRAGRTLLLFGEAEHPEVRGLLSYAGEGALVFGSVDELEGLPLQPETEYFLAAQTTQDRVAFEAARAWLHERLGHEVPVLETICDATRLRQQEAIDIARKVDAMVVVGGFDSGNTRRLADVAAAQGVFTVHVENESQLPVEQLRGCGIIGLTAGASTPKSIIDATQRFLESL</sequence>